<reference evidence="3" key="1">
    <citation type="journal article" date="2006" name="Toxicon">
        <title>Biochemical and biological activities of the venom of the Chinese pitviper Zhaoermia mangshanensis, with the complete amino acid sequence and phylogenetic analysis of a novel Arg49 phospholipase A2 myotoxin.</title>
        <authorList>
            <person name="Mebs D."/>
            <person name="Kuch U."/>
            <person name="Coronas F.I.V."/>
            <person name="Batista C.V.F."/>
            <person name="Gumprecht A."/>
            <person name="Possani L.D."/>
        </authorList>
    </citation>
    <scope>PROTEIN SEQUENCE</scope>
    <scope>FUNCTION</scope>
    <scope>SUBUNIT</scope>
    <scope>SUBCELLULAR LOCATION</scope>
    <scope>TISSUE SPECIFICITY</scope>
    <scope>MASS SPECTROMETRY</scope>
    <source>
        <tissue evidence="1">Venom</tissue>
    </source>
</reference>
<reference key="2">
    <citation type="journal article" date="2008" name="Toxicon">
        <title>Crystal structure of a novel myotoxic Arg49 phospholipase A2 homolog (zhaoermiatoxin) from Zhaoermia mangshanensis snake venom: insights into Arg49 coordination and the role of Lys122 in the polarization of the C-terminus.</title>
        <authorList>
            <person name="Murakami M.T."/>
            <person name="Kuch U."/>
            <person name="Betzel C."/>
            <person name="Mebs D."/>
            <person name="Arni R.K."/>
        </authorList>
    </citation>
    <scope>X-RAY CRYSTALLOGRAPHY (2.05 ANGSTROMS)</scope>
    <scope>DISULFIDE BONDS</scope>
    <source>
        <tissue>Venom</tissue>
    </source>
</reference>
<proteinExistence type="evidence at protein level"/>
<feature type="chain" id="PRO_0000250615" description="Basic phospholipase A2 homolog zhaoermiatoxin">
    <location>
        <begin position="1"/>
        <end position="121"/>
    </location>
</feature>
<feature type="disulfide bond" evidence="2">
    <location>
        <begin position="26"/>
        <end position="115"/>
    </location>
</feature>
<feature type="disulfide bond" evidence="2">
    <location>
        <begin position="28"/>
        <end position="44"/>
    </location>
</feature>
<feature type="disulfide bond" evidence="2">
    <location>
        <begin position="43"/>
        <end position="95"/>
    </location>
</feature>
<feature type="disulfide bond" evidence="2">
    <location>
        <begin position="49"/>
        <end position="121"/>
    </location>
</feature>
<feature type="disulfide bond" evidence="2">
    <location>
        <begin position="50"/>
        <end position="88"/>
    </location>
</feature>
<feature type="disulfide bond" evidence="2">
    <location>
        <begin position="57"/>
        <end position="81"/>
    </location>
</feature>
<feature type="disulfide bond" evidence="2">
    <location>
        <begin position="75"/>
        <end position="86"/>
    </location>
</feature>
<feature type="helix" evidence="4">
    <location>
        <begin position="2"/>
        <end position="13"/>
    </location>
</feature>
<feature type="helix" evidence="4">
    <location>
        <begin position="17"/>
        <end position="21"/>
    </location>
</feature>
<feature type="strand" evidence="4">
    <location>
        <begin position="22"/>
        <end position="24"/>
    </location>
</feature>
<feature type="turn" evidence="4">
    <location>
        <begin position="25"/>
        <end position="27"/>
    </location>
</feature>
<feature type="helix" evidence="4">
    <location>
        <begin position="39"/>
        <end position="53"/>
    </location>
</feature>
<feature type="turn" evidence="4">
    <location>
        <begin position="59"/>
        <end position="61"/>
    </location>
</feature>
<feature type="strand" evidence="4">
    <location>
        <begin position="67"/>
        <end position="69"/>
    </location>
</feature>
<feature type="strand" evidence="4">
    <location>
        <begin position="72"/>
        <end position="74"/>
    </location>
</feature>
<feature type="helix" evidence="4">
    <location>
        <begin position="80"/>
        <end position="99"/>
    </location>
</feature>
<feature type="helix" evidence="4">
    <location>
        <begin position="100"/>
        <end position="102"/>
    </location>
</feature>
<feature type="helix" evidence="4">
    <location>
        <begin position="105"/>
        <end position="108"/>
    </location>
</feature>
<feature type="helix" evidence="4">
    <location>
        <begin position="110"/>
        <end position="112"/>
    </location>
</feature>
<accession>P84776</accession>
<comment type="function">
    <text evidence="1">Snake venom phospholipase A2 homolog that induces myonecrosis, and edema. Has low myotoxic activity.</text>
</comment>
<comment type="subunit">
    <text evidence="1">Homodimer.</text>
</comment>
<comment type="subcellular location">
    <subcellularLocation>
        <location evidence="1">Secreted</location>
    </subcellularLocation>
</comment>
<comment type="tissue specificity">
    <text evidence="1">Expressed by the venom gland.</text>
</comment>
<comment type="mass spectrometry" mass="13972.0" method="Electrospray" evidence="1"/>
<comment type="toxic dose">
    <text evidence="1">LD(50) is in the range of 6.25-12.5 mg/kg by intraperitoneal injection into mice.</text>
</comment>
<comment type="similarity">
    <text evidence="3">Belongs to the phospholipase A2 family. Group II subfamily. R49 sub-subfamily.</text>
</comment>
<comment type="caution">
    <text evidence="3">Does not bind calcium as one of the calcium-binding sites is lost (Asp-&gt;Arg in position 48, which corresponds to 'Arg-49' in the current nomenclature).</text>
</comment>
<sequence length="121" mass="13985">SLIELTKMVFQETGKNPVTYYTLYGCNCGVGRRGKPKDATDRCCFVHRCCYKKLTGCDPKKDRYSYSWENKAIVCGEKNPCLKELCECDKAVAICLRKNLGTYDKNYRFTMKFLCDKPEKC</sequence>
<evidence type="ECO:0000269" key="1">
    <source>
    </source>
</evidence>
<evidence type="ECO:0000269" key="2">
    <source>
    </source>
</evidence>
<evidence type="ECO:0000305" key="3"/>
<evidence type="ECO:0007829" key="4">
    <source>
        <dbReference type="PDB" id="2PH4"/>
    </source>
</evidence>
<protein>
    <recommendedName>
        <fullName>Basic phospholipase A2 homolog zhaoermiatoxin</fullName>
        <shortName>svPLA2 homolog</shortName>
    </recommendedName>
</protein>
<keyword id="KW-0002">3D-structure</keyword>
<keyword id="KW-0903">Direct protein sequencing</keyword>
<keyword id="KW-1015">Disulfide bond</keyword>
<keyword id="KW-0959">Myotoxin</keyword>
<keyword id="KW-0964">Secreted</keyword>
<keyword id="KW-0800">Toxin</keyword>
<name>PA2H_PROMB</name>
<dbReference type="PDB" id="2PH4">
    <property type="method" value="X-ray"/>
    <property type="resolution" value="2.05 A"/>
    <property type="chains" value="A/B=1-121"/>
</dbReference>
<dbReference type="PDBsum" id="2PH4"/>
<dbReference type="SMR" id="P84776"/>
<dbReference type="BRENDA" id="3.1.1.4">
    <property type="organism ID" value="9394"/>
</dbReference>
<dbReference type="EvolutionaryTrace" id="P84776"/>
<dbReference type="GO" id="GO:0005576">
    <property type="term" value="C:extracellular region"/>
    <property type="evidence" value="ECO:0007669"/>
    <property type="project" value="UniProtKB-SubCell"/>
</dbReference>
<dbReference type="GO" id="GO:0005509">
    <property type="term" value="F:calcium ion binding"/>
    <property type="evidence" value="ECO:0007669"/>
    <property type="project" value="InterPro"/>
</dbReference>
<dbReference type="GO" id="GO:0047498">
    <property type="term" value="F:calcium-dependent phospholipase A2 activity"/>
    <property type="evidence" value="ECO:0007669"/>
    <property type="project" value="TreeGrafter"/>
</dbReference>
<dbReference type="GO" id="GO:0005543">
    <property type="term" value="F:phospholipid binding"/>
    <property type="evidence" value="ECO:0007669"/>
    <property type="project" value="TreeGrafter"/>
</dbReference>
<dbReference type="GO" id="GO:0090729">
    <property type="term" value="F:toxin activity"/>
    <property type="evidence" value="ECO:0007669"/>
    <property type="project" value="UniProtKB-KW"/>
</dbReference>
<dbReference type="GO" id="GO:0050482">
    <property type="term" value="P:arachidonate secretion"/>
    <property type="evidence" value="ECO:0007669"/>
    <property type="project" value="InterPro"/>
</dbReference>
<dbReference type="GO" id="GO:0016042">
    <property type="term" value="P:lipid catabolic process"/>
    <property type="evidence" value="ECO:0007669"/>
    <property type="project" value="InterPro"/>
</dbReference>
<dbReference type="GO" id="GO:0042130">
    <property type="term" value="P:negative regulation of T cell proliferation"/>
    <property type="evidence" value="ECO:0007669"/>
    <property type="project" value="TreeGrafter"/>
</dbReference>
<dbReference type="GO" id="GO:0006644">
    <property type="term" value="P:phospholipid metabolic process"/>
    <property type="evidence" value="ECO:0007669"/>
    <property type="project" value="InterPro"/>
</dbReference>
<dbReference type="CDD" id="cd00125">
    <property type="entry name" value="PLA2c"/>
    <property type="match status" value="1"/>
</dbReference>
<dbReference type="FunFam" id="1.20.90.10:FF:000001">
    <property type="entry name" value="Basic phospholipase A2 homolog"/>
    <property type="match status" value="1"/>
</dbReference>
<dbReference type="Gene3D" id="1.20.90.10">
    <property type="entry name" value="Phospholipase A2 domain"/>
    <property type="match status" value="1"/>
</dbReference>
<dbReference type="InterPro" id="IPR001211">
    <property type="entry name" value="PLipase_A2"/>
</dbReference>
<dbReference type="InterPro" id="IPR033112">
    <property type="entry name" value="PLipase_A2_Asp_AS"/>
</dbReference>
<dbReference type="InterPro" id="IPR016090">
    <property type="entry name" value="PLipase_A2_dom"/>
</dbReference>
<dbReference type="InterPro" id="IPR036444">
    <property type="entry name" value="PLipase_A2_dom_sf"/>
</dbReference>
<dbReference type="InterPro" id="IPR033113">
    <property type="entry name" value="PLipase_A2_His_AS"/>
</dbReference>
<dbReference type="PANTHER" id="PTHR11716">
    <property type="entry name" value="PHOSPHOLIPASE A2 FAMILY MEMBER"/>
    <property type="match status" value="1"/>
</dbReference>
<dbReference type="PANTHER" id="PTHR11716:SF9">
    <property type="entry name" value="PHOSPHOLIPASE A2, MEMBRANE ASSOCIATED"/>
    <property type="match status" value="1"/>
</dbReference>
<dbReference type="Pfam" id="PF00068">
    <property type="entry name" value="Phospholip_A2_1"/>
    <property type="match status" value="1"/>
</dbReference>
<dbReference type="PRINTS" id="PR00389">
    <property type="entry name" value="PHPHLIPASEA2"/>
</dbReference>
<dbReference type="SMART" id="SM00085">
    <property type="entry name" value="PA2c"/>
    <property type="match status" value="1"/>
</dbReference>
<dbReference type="SUPFAM" id="SSF48619">
    <property type="entry name" value="Phospholipase A2, PLA2"/>
    <property type="match status" value="1"/>
</dbReference>
<dbReference type="PROSITE" id="PS00119">
    <property type="entry name" value="PA2_ASP"/>
    <property type="match status" value="1"/>
</dbReference>
<dbReference type="PROSITE" id="PS00118">
    <property type="entry name" value="PA2_HIS"/>
    <property type="match status" value="1"/>
</dbReference>
<organism>
    <name type="scientific">Protobothrops mangshanensis</name>
    <name type="common">Mangshan pitviper</name>
    <name type="synonym">Zhaoermia mangshanensis</name>
    <dbReference type="NCBI Taxonomy" id="242058"/>
    <lineage>
        <taxon>Eukaryota</taxon>
        <taxon>Metazoa</taxon>
        <taxon>Chordata</taxon>
        <taxon>Craniata</taxon>
        <taxon>Vertebrata</taxon>
        <taxon>Euteleostomi</taxon>
        <taxon>Lepidosauria</taxon>
        <taxon>Squamata</taxon>
        <taxon>Bifurcata</taxon>
        <taxon>Unidentata</taxon>
        <taxon>Episquamata</taxon>
        <taxon>Toxicofera</taxon>
        <taxon>Serpentes</taxon>
        <taxon>Colubroidea</taxon>
        <taxon>Viperidae</taxon>
        <taxon>Crotalinae</taxon>
        <taxon>Protobothrops</taxon>
    </lineage>
</organism>